<evidence type="ECO:0000255" key="1">
    <source>
        <dbReference type="HAMAP-Rule" id="MF_01367"/>
    </source>
</evidence>
<evidence type="ECO:0000305" key="2"/>
<reference key="1">
    <citation type="journal article" date="2009" name="J. Bacteriol.">
        <title>Complete genome sequence of Rhodobacter sphaeroides KD131.</title>
        <authorList>
            <person name="Lim S.-K."/>
            <person name="Kim S.J."/>
            <person name="Cha S.H."/>
            <person name="Oh Y.-K."/>
            <person name="Rhee H.-J."/>
            <person name="Kim M.-S."/>
            <person name="Lee J.K."/>
        </authorList>
    </citation>
    <scope>NUCLEOTIDE SEQUENCE [LARGE SCALE GENOMIC DNA]</scope>
    <source>
        <strain>KD131 / KCTC 12085</strain>
    </source>
</reference>
<accession>B9KLA1</accession>
<keyword id="KW-0687">Ribonucleoprotein</keyword>
<keyword id="KW-0689">Ribosomal protein</keyword>
<keyword id="KW-0694">RNA-binding</keyword>
<keyword id="KW-0699">rRNA-binding</keyword>
<dbReference type="EMBL" id="CP001150">
    <property type="protein sequence ID" value="ACL99883.1"/>
    <property type="molecule type" value="Genomic_DNA"/>
</dbReference>
<dbReference type="RefSeq" id="WP_002722508.1">
    <property type="nucleotide sequence ID" value="NC_011963.1"/>
</dbReference>
<dbReference type="SMR" id="B9KLA1"/>
<dbReference type="GeneID" id="67445510"/>
<dbReference type="KEGG" id="rsk:RSKD131_0024"/>
<dbReference type="HOGENOM" id="CLU_095071_2_1_5"/>
<dbReference type="GO" id="GO:0022625">
    <property type="term" value="C:cytosolic large ribosomal subunit"/>
    <property type="evidence" value="ECO:0007669"/>
    <property type="project" value="TreeGrafter"/>
</dbReference>
<dbReference type="GO" id="GO:0070180">
    <property type="term" value="F:large ribosomal subunit rRNA binding"/>
    <property type="evidence" value="ECO:0007669"/>
    <property type="project" value="TreeGrafter"/>
</dbReference>
<dbReference type="GO" id="GO:0003735">
    <property type="term" value="F:structural constituent of ribosome"/>
    <property type="evidence" value="ECO:0007669"/>
    <property type="project" value="InterPro"/>
</dbReference>
<dbReference type="GO" id="GO:0006412">
    <property type="term" value="P:translation"/>
    <property type="evidence" value="ECO:0007669"/>
    <property type="project" value="UniProtKB-UniRule"/>
</dbReference>
<dbReference type="CDD" id="cd00337">
    <property type="entry name" value="Ribosomal_uL14"/>
    <property type="match status" value="1"/>
</dbReference>
<dbReference type="FunFam" id="2.40.150.20:FF:000001">
    <property type="entry name" value="50S ribosomal protein L14"/>
    <property type="match status" value="1"/>
</dbReference>
<dbReference type="Gene3D" id="2.40.150.20">
    <property type="entry name" value="Ribosomal protein L14"/>
    <property type="match status" value="1"/>
</dbReference>
<dbReference type="HAMAP" id="MF_01367">
    <property type="entry name" value="Ribosomal_uL14"/>
    <property type="match status" value="1"/>
</dbReference>
<dbReference type="InterPro" id="IPR000218">
    <property type="entry name" value="Ribosomal_uL14"/>
</dbReference>
<dbReference type="InterPro" id="IPR005745">
    <property type="entry name" value="Ribosomal_uL14_bac-type"/>
</dbReference>
<dbReference type="InterPro" id="IPR019972">
    <property type="entry name" value="Ribosomal_uL14_CS"/>
</dbReference>
<dbReference type="InterPro" id="IPR036853">
    <property type="entry name" value="Ribosomal_uL14_sf"/>
</dbReference>
<dbReference type="NCBIfam" id="TIGR01067">
    <property type="entry name" value="rplN_bact"/>
    <property type="match status" value="1"/>
</dbReference>
<dbReference type="PANTHER" id="PTHR11761">
    <property type="entry name" value="50S/60S RIBOSOMAL PROTEIN L14/L23"/>
    <property type="match status" value="1"/>
</dbReference>
<dbReference type="PANTHER" id="PTHR11761:SF3">
    <property type="entry name" value="LARGE RIBOSOMAL SUBUNIT PROTEIN UL14M"/>
    <property type="match status" value="1"/>
</dbReference>
<dbReference type="Pfam" id="PF00238">
    <property type="entry name" value="Ribosomal_L14"/>
    <property type="match status" value="1"/>
</dbReference>
<dbReference type="SMART" id="SM01374">
    <property type="entry name" value="Ribosomal_L14"/>
    <property type="match status" value="1"/>
</dbReference>
<dbReference type="SUPFAM" id="SSF50193">
    <property type="entry name" value="Ribosomal protein L14"/>
    <property type="match status" value="1"/>
</dbReference>
<dbReference type="PROSITE" id="PS00049">
    <property type="entry name" value="RIBOSOMAL_L14"/>
    <property type="match status" value="1"/>
</dbReference>
<gene>
    <name evidence="1" type="primary">rplN</name>
    <name type="ordered locus">RSKD131_0024</name>
</gene>
<feature type="chain" id="PRO_1000166935" description="Large ribosomal subunit protein uL14">
    <location>
        <begin position="1"/>
        <end position="122"/>
    </location>
</feature>
<proteinExistence type="inferred from homology"/>
<name>RL14_CERSK</name>
<comment type="function">
    <text evidence="1">Binds to 23S rRNA. Forms part of two intersubunit bridges in the 70S ribosome.</text>
</comment>
<comment type="subunit">
    <text evidence="1">Part of the 50S ribosomal subunit. Forms a cluster with proteins L3 and L19. In the 70S ribosome, L14 and L19 interact and together make contacts with the 16S rRNA in bridges B5 and B8.</text>
</comment>
<comment type="similarity">
    <text evidence="1">Belongs to the universal ribosomal protein uL14 family.</text>
</comment>
<organism>
    <name type="scientific">Cereibacter sphaeroides (strain KD131 / KCTC 12085)</name>
    <name type="common">Rhodobacter sphaeroides</name>
    <dbReference type="NCBI Taxonomy" id="557760"/>
    <lineage>
        <taxon>Bacteria</taxon>
        <taxon>Pseudomonadati</taxon>
        <taxon>Pseudomonadota</taxon>
        <taxon>Alphaproteobacteria</taxon>
        <taxon>Rhodobacterales</taxon>
        <taxon>Paracoccaceae</taxon>
        <taxon>Cereibacter</taxon>
    </lineage>
</organism>
<sequence length="122" mass="13493">MIQMQTNLDVADNSGARRVQCIKVLGGSHRRYASVGDIIVVSVKEAIPRGRVKKGDVRKAVVVRTAKEVRREDGTTIRFDRNAAVILNNQGEPVGTRIFGPVVRELRAKNFMKIISLAPEVL</sequence>
<protein>
    <recommendedName>
        <fullName evidence="1">Large ribosomal subunit protein uL14</fullName>
    </recommendedName>
    <alternativeName>
        <fullName evidence="2">50S ribosomal protein L14</fullName>
    </alternativeName>
</protein>